<protein>
    <recommendedName>
        <fullName>Acylphosphatase</fullName>
        <ecNumber>3.6.1.7</ecNumber>
    </recommendedName>
    <alternativeName>
        <fullName>Acylphosphate phosphohydrolase</fullName>
    </alternativeName>
</protein>
<comment type="catalytic activity">
    <reaction>
        <text>an acyl phosphate + H2O = a carboxylate + phosphate + H(+)</text>
        <dbReference type="Rhea" id="RHEA:14965"/>
        <dbReference type="ChEBI" id="CHEBI:15377"/>
        <dbReference type="ChEBI" id="CHEBI:15378"/>
        <dbReference type="ChEBI" id="CHEBI:29067"/>
        <dbReference type="ChEBI" id="CHEBI:43474"/>
        <dbReference type="ChEBI" id="CHEBI:59918"/>
        <dbReference type="EC" id="3.6.1.7"/>
    </reaction>
</comment>
<comment type="similarity">
    <text evidence="2">Belongs to the acylphosphatase family.</text>
</comment>
<proteinExistence type="inferred from homology"/>
<organism>
    <name type="scientific">Xanthomonas oryzae pv. oryzae (strain MAFF 311018)</name>
    <dbReference type="NCBI Taxonomy" id="342109"/>
    <lineage>
        <taxon>Bacteria</taxon>
        <taxon>Pseudomonadati</taxon>
        <taxon>Pseudomonadota</taxon>
        <taxon>Gammaproteobacteria</taxon>
        <taxon>Lysobacterales</taxon>
        <taxon>Lysobacteraceae</taxon>
        <taxon>Xanthomonas</taxon>
    </lineage>
</organism>
<name>ACYP_XANOM</name>
<feature type="chain" id="PRO_0000326850" description="Acylphosphatase">
    <location>
        <begin position="1"/>
        <end position="88"/>
    </location>
</feature>
<feature type="domain" description="Acylphosphatase-like" evidence="1">
    <location>
        <begin position="3"/>
        <end position="88"/>
    </location>
</feature>
<feature type="active site" evidence="1">
    <location>
        <position position="18"/>
    </location>
</feature>
<feature type="active site" evidence="1">
    <location>
        <position position="36"/>
    </location>
</feature>
<keyword id="KW-0378">Hydrolase</keyword>
<dbReference type="EC" id="3.6.1.7"/>
<dbReference type="EMBL" id="AP008229">
    <property type="protein sequence ID" value="BAE70170.1"/>
    <property type="molecule type" value="Genomic_DNA"/>
</dbReference>
<dbReference type="RefSeq" id="WP_011409264.1">
    <property type="nucleotide sequence ID" value="NC_007705.1"/>
</dbReference>
<dbReference type="SMR" id="Q2NZV7"/>
<dbReference type="KEGG" id="xom:XOO3415"/>
<dbReference type="HOGENOM" id="CLU_141932_1_3_6"/>
<dbReference type="GO" id="GO:0003998">
    <property type="term" value="F:acylphosphatase activity"/>
    <property type="evidence" value="ECO:0007669"/>
    <property type="project" value="UniProtKB-EC"/>
</dbReference>
<dbReference type="Gene3D" id="3.30.70.100">
    <property type="match status" value="1"/>
</dbReference>
<dbReference type="InterPro" id="IPR020456">
    <property type="entry name" value="Acylphosphatase"/>
</dbReference>
<dbReference type="InterPro" id="IPR001792">
    <property type="entry name" value="Acylphosphatase-like_dom"/>
</dbReference>
<dbReference type="InterPro" id="IPR036046">
    <property type="entry name" value="Acylphosphatase-like_dom_sf"/>
</dbReference>
<dbReference type="NCBIfam" id="NF011018">
    <property type="entry name" value="PRK14446.1"/>
    <property type="match status" value="1"/>
</dbReference>
<dbReference type="PANTHER" id="PTHR47268">
    <property type="entry name" value="ACYLPHOSPHATASE"/>
    <property type="match status" value="1"/>
</dbReference>
<dbReference type="PANTHER" id="PTHR47268:SF4">
    <property type="entry name" value="ACYLPHOSPHATASE"/>
    <property type="match status" value="1"/>
</dbReference>
<dbReference type="Pfam" id="PF00708">
    <property type="entry name" value="Acylphosphatase"/>
    <property type="match status" value="1"/>
</dbReference>
<dbReference type="SUPFAM" id="SSF54975">
    <property type="entry name" value="Acylphosphatase/BLUF domain-like"/>
    <property type="match status" value="1"/>
</dbReference>
<dbReference type="PROSITE" id="PS51160">
    <property type="entry name" value="ACYLPHOSPHATASE_3"/>
    <property type="match status" value="1"/>
</dbReference>
<gene>
    <name type="primary">acyP</name>
    <name type="ordered locus">XOO3415</name>
</gene>
<reference key="1">
    <citation type="journal article" date="2005" name="Jpn. Agric. Res. Q.">
        <title>Genome sequence of Xanthomonas oryzae pv. oryzae suggests contribution of large numbers of effector genes and insertion sequences to its race diversity.</title>
        <authorList>
            <person name="Ochiai H."/>
            <person name="Inoue Y."/>
            <person name="Takeya M."/>
            <person name="Sasaki A."/>
            <person name="Kaku H."/>
        </authorList>
    </citation>
    <scope>NUCLEOTIDE SEQUENCE [LARGE SCALE GENOMIC DNA]</scope>
    <source>
        <strain>MAFF 311018</strain>
    </source>
</reference>
<evidence type="ECO:0000255" key="1">
    <source>
        <dbReference type="PROSITE-ProRule" id="PRU00520"/>
    </source>
</evidence>
<evidence type="ECO:0000305" key="2"/>
<sequence>MQAARFVVSGVVQGVWYRASTRERAVALGLVGHARNQTDGSVEVVAAGSAAALGALEAWLWQGPPAATVEAVTRTPCAVPPTEDFVTG</sequence>
<accession>Q2NZV7</accession>